<name>H2B_LODEL</name>
<gene>
    <name type="primary">HTB1</name>
    <name type="ORF">LELG_01686</name>
</gene>
<protein>
    <recommendedName>
        <fullName>Histone H2B</fullName>
    </recommendedName>
</protein>
<accession>A5DWF0</accession>
<proteinExistence type="inferred from homology"/>
<organism>
    <name type="scientific">Lodderomyces elongisporus (strain ATCC 11503 / CBS 2605 / JCM 1781 / NBRC 1676 / NRRL YB-4239)</name>
    <name type="common">Yeast</name>
    <name type="synonym">Saccharomyces elongisporus</name>
    <dbReference type="NCBI Taxonomy" id="379508"/>
    <lineage>
        <taxon>Eukaryota</taxon>
        <taxon>Fungi</taxon>
        <taxon>Dikarya</taxon>
        <taxon>Ascomycota</taxon>
        <taxon>Saccharomycotina</taxon>
        <taxon>Pichiomycetes</taxon>
        <taxon>Debaryomycetaceae</taxon>
        <taxon>Candida/Lodderomyces clade</taxon>
        <taxon>Lodderomyces</taxon>
    </lineage>
</organism>
<reference key="1">
    <citation type="journal article" date="2009" name="Nature">
        <title>Evolution of pathogenicity and sexual reproduction in eight Candida genomes.</title>
        <authorList>
            <person name="Butler G."/>
            <person name="Rasmussen M.D."/>
            <person name="Lin M.F."/>
            <person name="Santos M.A.S."/>
            <person name="Sakthikumar S."/>
            <person name="Munro C.A."/>
            <person name="Rheinbay E."/>
            <person name="Grabherr M."/>
            <person name="Forche A."/>
            <person name="Reedy J.L."/>
            <person name="Agrafioti I."/>
            <person name="Arnaud M.B."/>
            <person name="Bates S."/>
            <person name="Brown A.J.P."/>
            <person name="Brunke S."/>
            <person name="Costanzo M.C."/>
            <person name="Fitzpatrick D.A."/>
            <person name="de Groot P.W.J."/>
            <person name="Harris D."/>
            <person name="Hoyer L.L."/>
            <person name="Hube B."/>
            <person name="Klis F.M."/>
            <person name="Kodira C."/>
            <person name="Lennard N."/>
            <person name="Logue M.E."/>
            <person name="Martin R."/>
            <person name="Neiman A.M."/>
            <person name="Nikolaou E."/>
            <person name="Quail M.A."/>
            <person name="Quinn J."/>
            <person name="Santos M.C."/>
            <person name="Schmitzberger F.F."/>
            <person name="Sherlock G."/>
            <person name="Shah P."/>
            <person name="Silverstein K.A.T."/>
            <person name="Skrzypek M.S."/>
            <person name="Soll D."/>
            <person name="Staggs R."/>
            <person name="Stansfield I."/>
            <person name="Stumpf M.P.H."/>
            <person name="Sudbery P.E."/>
            <person name="Srikantha T."/>
            <person name="Zeng Q."/>
            <person name="Berman J."/>
            <person name="Berriman M."/>
            <person name="Heitman J."/>
            <person name="Gow N.A.R."/>
            <person name="Lorenz M.C."/>
            <person name="Birren B.W."/>
            <person name="Kellis M."/>
            <person name="Cuomo C.A."/>
        </authorList>
    </citation>
    <scope>NUCLEOTIDE SEQUENCE [LARGE SCALE GENOMIC DNA]</scope>
    <source>
        <strain>ATCC 11503 / BCRC 21390 / CBS 2605 / JCM 1781 / NBRC 1676 / NRRL YB-4239</strain>
    </source>
</reference>
<keyword id="KW-0007">Acetylation</keyword>
<keyword id="KW-0158">Chromosome</keyword>
<keyword id="KW-0238">DNA-binding</keyword>
<keyword id="KW-1017">Isopeptide bond</keyword>
<keyword id="KW-0544">Nucleosome core</keyword>
<keyword id="KW-0539">Nucleus</keyword>
<keyword id="KW-0597">Phosphoprotein</keyword>
<keyword id="KW-1185">Reference proteome</keyword>
<keyword id="KW-0832">Ubl conjugation</keyword>
<sequence length="131" mass="14203">MAPKAEKKPASKAPAEKKPAAKKTASSTDGGKKRTKARKETYSSYIYKVLKQTHPDTGISQKAMSIMNSFVNDIFERIASEASKLAAYNKKSTISAREVQTAVRLILPGELAKHAVSEGTRAVTKYSSAQN</sequence>
<dbReference type="EMBL" id="CH981525">
    <property type="protein sequence ID" value="EDK43508.1"/>
    <property type="molecule type" value="Genomic_DNA"/>
</dbReference>
<dbReference type="RefSeq" id="XP_001526858.1">
    <property type="nucleotide sequence ID" value="XM_001526808.1"/>
</dbReference>
<dbReference type="SMR" id="A5DWF0"/>
<dbReference type="FunCoup" id="A5DWF0">
    <property type="interactions" value="1051"/>
</dbReference>
<dbReference type="STRING" id="379508.A5DWF0"/>
<dbReference type="GeneID" id="5233837"/>
<dbReference type="KEGG" id="lel:PVL30_001659"/>
<dbReference type="VEuPathDB" id="FungiDB:LELG_01686"/>
<dbReference type="eggNOG" id="KOG1744">
    <property type="taxonomic scope" value="Eukaryota"/>
</dbReference>
<dbReference type="HOGENOM" id="CLU_075666_1_3_1"/>
<dbReference type="InParanoid" id="A5DWF0"/>
<dbReference type="OMA" id="FCPFAIR"/>
<dbReference type="OrthoDB" id="10254238at2759"/>
<dbReference type="Proteomes" id="UP000001996">
    <property type="component" value="Unassembled WGS sequence"/>
</dbReference>
<dbReference type="GO" id="GO:0000786">
    <property type="term" value="C:nucleosome"/>
    <property type="evidence" value="ECO:0007669"/>
    <property type="project" value="UniProtKB-KW"/>
</dbReference>
<dbReference type="GO" id="GO:0005634">
    <property type="term" value="C:nucleus"/>
    <property type="evidence" value="ECO:0007669"/>
    <property type="project" value="UniProtKB-SubCell"/>
</dbReference>
<dbReference type="GO" id="GO:0035861">
    <property type="term" value="C:site of double-strand break"/>
    <property type="evidence" value="ECO:0007669"/>
    <property type="project" value="EnsemblFungi"/>
</dbReference>
<dbReference type="GO" id="GO:0003677">
    <property type="term" value="F:DNA binding"/>
    <property type="evidence" value="ECO:0007669"/>
    <property type="project" value="UniProtKB-KW"/>
</dbReference>
<dbReference type="GO" id="GO:0046982">
    <property type="term" value="F:protein heterodimerization activity"/>
    <property type="evidence" value="ECO:0007669"/>
    <property type="project" value="InterPro"/>
</dbReference>
<dbReference type="GO" id="GO:0030527">
    <property type="term" value="F:structural constituent of chromatin"/>
    <property type="evidence" value="ECO:0007669"/>
    <property type="project" value="InterPro"/>
</dbReference>
<dbReference type="CDD" id="cd22910">
    <property type="entry name" value="HFD_H2B"/>
    <property type="match status" value="1"/>
</dbReference>
<dbReference type="FunFam" id="1.10.20.10:FF:000014">
    <property type="entry name" value="Histone H2B"/>
    <property type="match status" value="1"/>
</dbReference>
<dbReference type="Gene3D" id="1.10.20.10">
    <property type="entry name" value="Histone, subunit A"/>
    <property type="match status" value="1"/>
</dbReference>
<dbReference type="InterPro" id="IPR009072">
    <property type="entry name" value="Histone-fold"/>
</dbReference>
<dbReference type="InterPro" id="IPR007125">
    <property type="entry name" value="Histone_H2A/H2B/H3"/>
</dbReference>
<dbReference type="InterPro" id="IPR000558">
    <property type="entry name" value="Histone_H2B"/>
</dbReference>
<dbReference type="InterPro" id="IPR055333">
    <property type="entry name" value="HISTONE_H2B_site"/>
</dbReference>
<dbReference type="PANTHER" id="PTHR23428">
    <property type="entry name" value="HISTONE H2B"/>
    <property type="match status" value="1"/>
</dbReference>
<dbReference type="Pfam" id="PF00125">
    <property type="entry name" value="Histone"/>
    <property type="match status" value="1"/>
</dbReference>
<dbReference type="PRINTS" id="PR00621">
    <property type="entry name" value="HISTONEH2B"/>
</dbReference>
<dbReference type="SMART" id="SM00427">
    <property type="entry name" value="H2B"/>
    <property type="match status" value="1"/>
</dbReference>
<dbReference type="SUPFAM" id="SSF47113">
    <property type="entry name" value="Histone-fold"/>
    <property type="match status" value="1"/>
</dbReference>
<dbReference type="PROSITE" id="PS00357">
    <property type="entry name" value="HISTONE_H2B"/>
    <property type="match status" value="1"/>
</dbReference>
<comment type="function">
    <text>Core component of nucleosome. Nucleosomes wrap and compact DNA into chromatin, limiting DNA accessibility to the cellular machineries which require DNA as a template. Histones thereby play a central role in transcription regulation, DNA repair, DNA replication and chromosomal stability. DNA accessibility is regulated via a complex set of post-translational modifications of histones, also called histone code, and nucleosome remodeling.</text>
</comment>
<comment type="subunit">
    <text>The nucleosome is a histone octamer containing two molecules each of H2A, H2B, H3 and H4 assembled in one H3-H4 heterotetramer and two H2A-H2B heterodimers. The octamer wraps approximately 147 bp of DNA.</text>
</comment>
<comment type="subcellular location">
    <subcellularLocation>
        <location evidence="1">Nucleus</location>
    </subcellularLocation>
    <subcellularLocation>
        <location evidence="1">Chromosome</location>
    </subcellularLocation>
</comment>
<comment type="PTM">
    <text evidence="1">Monoubiquitinated by the UBC2-BRE1 complex to form H2BK123ub1. H2BK123ub1 gives a specific tag for epigenetic transcriptional activation and is also prerequisite for H3K4me and H3K79me formation. H2BK123ub1 also modulates the formation of double-strand breaks during meiosis and is a prerequisite for DNA-damage checkpoint activation (By similarity).</text>
</comment>
<comment type="PTM">
    <text evidence="1">Phosphorylated by STE20 to form H2BS10ph during progression through meiotic prophase. May be correlated with chromosome condensation (By similarity).</text>
</comment>
<comment type="PTM">
    <text evidence="1">Acetylated by GCN5 to form H2BK11ac and H2BK16ac. H2BK16ac can also be formed by ESA1. Acetylation of N-terminal lysines and particularly formation of H2BK11acK16ac has a positive effect on transcription (By similarity).</text>
</comment>
<comment type="PTM">
    <text evidence="1">Sumoylation to form H2BK6su or H2BK7su, and probably also H2BK16su or H2BK17su, occurs preferentially near the telomeres and represses gene transcription.</text>
</comment>
<comment type="similarity">
    <text evidence="3">Belongs to the histone H2B family.</text>
</comment>
<comment type="caution">
    <text evidence="3">To ensure consistency between histone entries, we follow the 'Brno' nomenclature for histone modifications, with positions referring to those used in the literature for the 'closest' model organism. Due to slight variations in histone sequences between organisms and to the presence of initiator methionine in UniProtKB/Swiss-Prot sequences, the actual positions of modified amino acids in the sequence generally differ. In this entry the following conventions are used: H2BK6ac = acetylated Lys-7; H2BK6su = sumoylated Lys-7; H2BK7ac = acetylated Lys-8; H2BK7su = sumoylated Lys-8; H2BS10ph = phosphorylated Ser-11; H2BK11ac = acetylated Lys-12; H2BK16ac = acetylated Lys-17; H2BK16su = sumoylated Lys-17; H2BK17su = sumoylated Lys-18; H2BK123ub1 = monoubiquitinated Lys-125.</text>
</comment>
<feature type="initiator methionine" description="Removed" evidence="1">
    <location>
        <position position="1"/>
    </location>
</feature>
<feature type="chain" id="PRO_0000297849" description="Histone H2B">
    <location>
        <begin position="2"/>
        <end position="131"/>
    </location>
</feature>
<feature type="region of interest" description="Disordered" evidence="2">
    <location>
        <begin position="1"/>
        <end position="38"/>
    </location>
</feature>
<feature type="compositionally biased region" description="Basic and acidic residues" evidence="2">
    <location>
        <begin position="1"/>
        <end position="19"/>
    </location>
</feature>
<feature type="modified residue" description="N6-acetyllysine; alternate" evidence="1">
    <location>
        <position position="7"/>
    </location>
</feature>
<feature type="modified residue" description="N6-acetyllysine; alternate" evidence="1">
    <location>
        <position position="8"/>
    </location>
</feature>
<feature type="modified residue" description="Phosphoserine" evidence="1">
    <location>
        <position position="11"/>
    </location>
</feature>
<feature type="modified residue" description="N6-acetyllysine" evidence="1">
    <location>
        <position position="12"/>
    </location>
</feature>
<feature type="modified residue" description="N6-acetyllysine; alternate" evidence="1">
    <location>
        <position position="17"/>
    </location>
</feature>
<feature type="cross-link" description="Glycyl lysine isopeptide (Lys-Gly) (interchain with G-Cter in SUMO); alternate" evidence="1">
    <location>
        <position position="7"/>
    </location>
</feature>
<feature type="cross-link" description="Glycyl lysine isopeptide (Lys-Gly) (interchain with G-Cter in SUMO); alternate" evidence="1">
    <location>
        <position position="8"/>
    </location>
</feature>
<feature type="cross-link" description="Glycyl lysine isopeptide (Lys-Gly) (interchain with G-Cter in SUMO); alternate" evidence="1">
    <location>
        <position position="17"/>
    </location>
</feature>
<feature type="cross-link" description="Glycyl lysine isopeptide (Lys-Gly) (interchain with G-Cter in SUMO)" evidence="1">
    <location>
        <position position="18"/>
    </location>
</feature>
<feature type="cross-link" description="Glycyl lysine isopeptide (Lys-Gly) (interchain with G-Cter in ubiquitin)" evidence="1">
    <location>
        <position position="125"/>
    </location>
</feature>
<evidence type="ECO:0000250" key="1"/>
<evidence type="ECO:0000256" key="2">
    <source>
        <dbReference type="SAM" id="MobiDB-lite"/>
    </source>
</evidence>
<evidence type="ECO:0000305" key="3"/>